<feature type="chain" id="PRO_0000424434" description="Protein ECERIFERUM 26-like">
    <location>
        <begin position="1"/>
        <end position="420"/>
    </location>
</feature>
<protein>
    <recommendedName>
        <fullName>Protein ECERIFERUM 26-like</fullName>
        <shortName>CER26-like</shortName>
    </recommendedName>
    <alternativeName>
        <fullName>CER2-like protein 2</fullName>
        <shortName>CER2-like2</shortName>
    </alternativeName>
</protein>
<reference key="1">
    <citation type="journal article" date="2000" name="DNA Res.">
        <title>Structural analysis of Arabidopsis thaliana chromosome 3. II. Sequence features of the 4,251,695 bp regions covered by 90 P1, TAC and BAC clones.</title>
        <authorList>
            <person name="Kaneko T."/>
            <person name="Katoh T."/>
            <person name="Sato S."/>
            <person name="Nakamura Y."/>
            <person name="Asamizu E."/>
            <person name="Tabata S."/>
        </authorList>
    </citation>
    <scope>NUCLEOTIDE SEQUENCE [LARGE SCALE GENOMIC DNA]</scope>
    <source>
        <strain>cv. Columbia</strain>
    </source>
</reference>
<reference key="2">
    <citation type="journal article" date="2017" name="Plant J.">
        <title>Araport11: a complete reannotation of the Arabidopsis thaliana reference genome.</title>
        <authorList>
            <person name="Cheng C.Y."/>
            <person name="Krishnakumar V."/>
            <person name="Chan A.P."/>
            <person name="Thibaud-Nissen F."/>
            <person name="Schobel S."/>
            <person name="Town C.D."/>
        </authorList>
    </citation>
    <scope>GENOME REANNOTATION</scope>
    <source>
        <strain>cv. Columbia</strain>
    </source>
</reference>
<reference key="3">
    <citation type="submission" date="2006-08" db="EMBL/GenBank/DDBJ databases">
        <title>Arabidopsis ORF Clones.</title>
        <authorList>
            <person name="Quinitio C."/>
            <person name="Chen H."/>
            <person name="Kim C.J."/>
            <person name="Shinn P."/>
            <person name="Ecker J.R."/>
        </authorList>
    </citation>
    <scope>NUCLEOTIDE SEQUENCE [MRNA]</scope>
    <source>
        <strain>cv. Columbia</strain>
    </source>
</reference>
<reference key="4">
    <citation type="journal article" date="2012" name="Plant Physiol.">
        <title>Arabidopsis ECERIFERUM2 is a component of the fatty acid elongation machinery required for fatty acid extension to exceptional lengths.</title>
        <authorList>
            <person name="Haslam T.M."/>
            <person name="Manas-Fernandez A."/>
            <person name="Zhao L."/>
            <person name="Kunst L."/>
        </authorList>
    </citation>
    <scope>TISSUE SPECIFICITY</scope>
</reference>
<reference key="5">
    <citation type="journal article" date="2013" name="Plant J.">
        <title>The Arabidopsis cer26 mutant, like the cer2 mutant, is specifically affected in the very long chain fatty acid elongation process.</title>
        <authorList>
            <person name="Pascal S."/>
            <person name="Bernard A."/>
            <person name="Sorel M."/>
            <person name="Pervent M."/>
            <person name="Vile D."/>
            <person name="Haslam R.P."/>
            <person name="Napier J.A."/>
            <person name="Lessire R."/>
            <person name="Domergue F."/>
            <person name="Joubes J."/>
        </authorList>
    </citation>
    <scope>TISSUE SPECIFICITY</scope>
</reference>
<keyword id="KW-0961">Cell wall biogenesis/degradation</keyword>
<keyword id="KW-1185">Reference proteome</keyword>
<name>CR26L_ARATH</name>
<accession>Q9LIS1</accession>
<gene>
    <name type="primary">CER26L</name>
    <name type="ordered locus">At3g23840</name>
    <name type="ORF">F14O13.3</name>
</gene>
<proteinExistence type="evidence at transcript level"/>
<dbReference type="EMBL" id="AP001297">
    <property type="protein sequence ID" value="BAB03002.1"/>
    <property type="molecule type" value="Genomic_DNA"/>
</dbReference>
<dbReference type="EMBL" id="CP002686">
    <property type="protein sequence ID" value="AEE76821.1"/>
    <property type="molecule type" value="Genomic_DNA"/>
</dbReference>
<dbReference type="EMBL" id="BT026480">
    <property type="protein sequence ID" value="ABH04587.1"/>
    <property type="molecule type" value="mRNA"/>
</dbReference>
<dbReference type="RefSeq" id="NP_566741.1">
    <property type="nucleotide sequence ID" value="NM_113289.3"/>
</dbReference>
<dbReference type="SMR" id="Q9LIS1"/>
<dbReference type="BioGRID" id="7299">
    <property type="interactions" value="8"/>
</dbReference>
<dbReference type="FunCoup" id="Q9LIS1">
    <property type="interactions" value="145"/>
</dbReference>
<dbReference type="STRING" id="3702.Q9LIS1"/>
<dbReference type="PaxDb" id="3702-AT3G23840.1"/>
<dbReference type="ProteomicsDB" id="222726"/>
<dbReference type="EnsemblPlants" id="AT3G23840.1">
    <property type="protein sequence ID" value="AT3G23840.1"/>
    <property type="gene ID" value="AT3G23840"/>
</dbReference>
<dbReference type="GeneID" id="821967"/>
<dbReference type="Gramene" id="AT3G23840.1">
    <property type="protein sequence ID" value="AT3G23840.1"/>
    <property type="gene ID" value="AT3G23840"/>
</dbReference>
<dbReference type="KEGG" id="ath:AT3G23840"/>
<dbReference type="Araport" id="AT3G23840"/>
<dbReference type="TAIR" id="AT3G23840">
    <property type="gene designation" value="CER26-LIKE"/>
</dbReference>
<dbReference type="eggNOG" id="ENOG502QQYP">
    <property type="taxonomic scope" value="Eukaryota"/>
</dbReference>
<dbReference type="HOGENOM" id="CLU_049517_0_0_1"/>
<dbReference type="InParanoid" id="Q9LIS1"/>
<dbReference type="OMA" id="SWAHIMG"/>
<dbReference type="PhylomeDB" id="Q9LIS1"/>
<dbReference type="BRENDA" id="2.3.1.199">
    <property type="organism ID" value="399"/>
</dbReference>
<dbReference type="PRO" id="PR:Q9LIS1"/>
<dbReference type="Proteomes" id="UP000006548">
    <property type="component" value="Chromosome 3"/>
</dbReference>
<dbReference type="ExpressionAtlas" id="Q9LIS1">
    <property type="expression patterns" value="baseline and differential"/>
</dbReference>
<dbReference type="GO" id="GO:0009535">
    <property type="term" value="C:chloroplast thylakoid membrane"/>
    <property type="evidence" value="ECO:0007005"/>
    <property type="project" value="TAIR"/>
</dbReference>
<dbReference type="GO" id="GO:0071555">
    <property type="term" value="P:cell wall organization"/>
    <property type="evidence" value="ECO:0007669"/>
    <property type="project" value="UniProtKB-KW"/>
</dbReference>
<dbReference type="GO" id="GO:0009555">
    <property type="term" value="P:pollen development"/>
    <property type="evidence" value="ECO:0000316"/>
    <property type="project" value="TAIR"/>
</dbReference>
<dbReference type="GO" id="GO:0042761">
    <property type="term" value="P:very long-chain fatty acid biosynthetic process"/>
    <property type="evidence" value="ECO:0000314"/>
    <property type="project" value="TAIR"/>
</dbReference>
<dbReference type="FunFam" id="3.30.559.10:FF:000092">
    <property type="entry name" value="Protein ECERIFERUM 26-like"/>
    <property type="match status" value="1"/>
</dbReference>
<dbReference type="Gene3D" id="3.30.559.10">
    <property type="entry name" value="Chloramphenicol acetyltransferase-like domain"/>
    <property type="match status" value="2"/>
</dbReference>
<dbReference type="InterPro" id="IPR023213">
    <property type="entry name" value="CAT-like_dom_sf"/>
</dbReference>
<dbReference type="InterPro" id="IPR050317">
    <property type="entry name" value="Plant_Fungal_Acyltransferase"/>
</dbReference>
<dbReference type="PANTHER" id="PTHR31642:SF115">
    <property type="entry name" value="PROTEIN ECERIFERUM 26-LIKE"/>
    <property type="match status" value="1"/>
</dbReference>
<dbReference type="PANTHER" id="PTHR31642">
    <property type="entry name" value="TRICHOTHECENE 3-O-ACETYLTRANSFERASE"/>
    <property type="match status" value="1"/>
</dbReference>
<dbReference type="Pfam" id="PF02458">
    <property type="entry name" value="Transferase"/>
    <property type="match status" value="1"/>
</dbReference>
<sequence length="420" mass="46429">MGLVQEEGSGPVHGFRLSTVSASLPSETGTTHEPTGLDLAMKLHYLKAVYIYSAGTARDLTVMDVKAPLFSVFYQIPCIIGRFRRHESGRPYLKCNDCGTRFVESHCDLTVEEWLRVPDRSVDESLVYHQPVGPDLAFSPLLYIQMTRFSCGGLALGLSWAHIMGDPFSLSHFFNLWAQAFAGGKIYCPKTSVTERDFQNPTSTFKKPDSVKQVDLVGDLWVAPNNSKMTTFSFNLTVNDLKTHFPVNGDGEFEILTGIIWKCVATVRGESAPVTITVIRSDPKKLKPRAVRNGQMISSIHVDFSVAEASLEEIVKSIGEAKDERVVIDEIVDDVSDFIVYGANLTFVDMSEVDFYEAKVMGKSPESVYCNVQGIGDDGAVVVLPGVVEEERVVTVTLPVDEIEKVKWEMKKCGLITPLV</sequence>
<comment type="function">
    <text evidence="1">Involved in biosynthesis of the epicuticular wax. Plays a role in very-long-chain fatty acid (VLCFA) biosynthesis and is required for VLCFA elongation in leaf. Despite its classification as a BAHD acyltransferase based on sequence homology, CER26L does not seem to share the catalytic mechanism of the members of the BAHD family (By similarity).</text>
</comment>
<comment type="tissue specificity">
    <text evidence="2 3">Highly expressed in flowers. Expressed in leaves.</text>
</comment>
<comment type="similarity">
    <text evidence="4">Belongs to the plant acyltransferase family.</text>
</comment>
<organism>
    <name type="scientific">Arabidopsis thaliana</name>
    <name type="common">Mouse-ear cress</name>
    <dbReference type="NCBI Taxonomy" id="3702"/>
    <lineage>
        <taxon>Eukaryota</taxon>
        <taxon>Viridiplantae</taxon>
        <taxon>Streptophyta</taxon>
        <taxon>Embryophyta</taxon>
        <taxon>Tracheophyta</taxon>
        <taxon>Spermatophyta</taxon>
        <taxon>Magnoliopsida</taxon>
        <taxon>eudicotyledons</taxon>
        <taxon>Gunneridae</taxon>
        <taxon>Pentapetalae</taxon>
        <taxon>rosids</taxon>
        <taxon>malvids</taxon>
        <taxon>Brassicales</taxon>
        <taxon>Brassicaceae</taxon>
        <taxon>Camelineae</taxon>
        <taxon>Arabidopsis</taxon>
    </lineage>
</organism>
<evidence type="ECO:0000250" key="1"/>
<evidence type="ECO:0000269" key="2">
    <source>
    </source>
</evidence>
<evidence type="ECO:0000269" key="3">
    <source>
    </source>
</evidence>
<evidence type="ECO:0000305" key="4"/>